<comment type="function">
    <text evidence="1">General (non sugar-specific) component of the phosphoenolpyruvate-dependent sugar phosphotransferase system (sugar PTS). This major carbohydrate active-transport system catalyzes the phosphorylation of incoming sugar substrates concomitantly with their translocation across the cell membrane. The phosphoryl group from phosphoenolpyruvate (PEP) is transferred to the phosphoryl carrier protein HPr by enzyme I. Phospho-HPr then transfers it to the PTS EIIA domain.</text>
</comment>
<comment type="subcellular location">
    <subcellularLocation>
        <location evidence="1">Cytoplasm</location>
    </subcellularLocation>
</comment>
<comment type="similarity">
    <text evidence="3">Belongs to the HPr family.</text>
</comment>
<sequence>MFQRDIKITTPNGLHTRPAALLVKEAKKFISEINIISNGKSANAKSLFKLQTLGLVQNSLITISAHGIDEKVAVEDLAKFLTTLK</sequence>
<accession>Q89B03</accession>
<feature type="chain" id="PRO_0000107846" description="Phosphocarrier protein HPr">
    <location>
        <begin position="1"/>
        <end position="85"/>
    </location>
</feature>
<feature type="domain" description="HPr" evidence="2">
    <location>
        <begin position="1"/>
        <end position="85"/>
    </location>
</feature>
<feature type="active site" description="Pros-phosphohistidine intermediate" evidence="2">
    <location>
        <position position="15"/>
    </location>
</feature>
<organism>
    <name type="scientific">Buchnera aphidicola subsp. Baizongia pistaciae (strain Bp)</name>
    <dbReference type="NCBI Taxonomy" id="224915"/>
    <lineage>
        <taxon>Bacteria</taxon>
        <taxon>Pseudomonadati</taxon>
        <taxon>Pseudomonadota</taxon>
        <taxon>Gammaproteobacteria</taxon>
        <taxon>Enterobacterales</taxon>
        <taxon>Erwiniaceae</taxon>
        <taxon>Buchnera</taxon>
    </lineage>
</organism>
<dbReference type="EMBL" id="AE016826">
    <property type="protein sequence ID" value="AAO26800.1"/>
    <property type="molecule type" value="Genomic_DNA"/>
</dbReference>
<dbReference type="RefSeq" id="WP_011091201.1">
    <property type="nucleotide sequence ID" value="NC_004545.1"/>
</dbReference>
<dbReference type="SMR" id="Q89B03"/>
<dbReference type="STRING" id="224915.bbp_061"/>
<dbReference type="KEGG" id="bab:bbp_061"/>
<dbReference type="eggNOG" id="COG1925">
    <property type="taxonomic scope" value="Bacteria"/>
</dbReference>
<dbReference type="HOGENOM" id="CLU_136230_2_3_6"/>
<dbReference type="OrthoDB" id="9809047at2"/>
<dbReference type="Proteomes" id="UP000000601">
    <property type="component" value="Chromosome"/>
</dbReference>
<dbReference type="GO" id="GO:0005737">
    <property type="term" value="C:cytoplasm"/>
    <property type="evidence" value="ECO:0007669"/>
    <property type="project" value="UniProtKB-SubCell"/>
</dbReference>
<dbReference type="GO" id="GO:0009401">
    <property type="term" value="P:phosphoenolpyruvate-dependent sugar phosphotransferase system"/>
    <property type="evidence" value="ECO:0007669"/>
    <property type="project" value="UniProtKB-KW"/>
</dbReference>
<dbReference type="CDD" id="cd00367">
    <property type="entry name" value="PTS-HPr_like"/>
    <property type="match status" value="1"/>
</dbReference>
<dbReference type="Gene3D" id="3.30.1340.10">
    <property type="entry name" value="HPr-like"/>
    <property type="match status" value="1"/>
</dbReference>
<dbReference type="InterPro" id="IPR050399">
    <property type="entry name" value="HPr"/>
</dbReference>
<dbReference type="InterPro" id="IPR000032">
    <property type="entry name" value="HPr-like"/>
</dbReference>
<dbReference type="InterPro" id="IPR035895">
    <property type="entry name" value="HPr-like_sf"/>
</dbReference>
<dbReference type="InterPro" id="IPR001020">
    <property type="entry name" value="PTS_HPr_His_P_site"/>
</dbReference>
<dbReference type="InterPro" id="IPR002114">
    <property type="entry name" value="PTS_HPr_Ser_P_site"/>
</dbReference>
<dbReference type="NCBIfam" id="TIGR01003">
    <property type="entry name" value="PTS_HPr_family"/>
    <property type="match status" value="1"/>
</dbReference>
<dbReference type="PANTHER" id="PTHR33705">
    <property type="entry name" value="PHOSPHOCARRIER PROTEIN HPR"/>
    <property type="match status" value="1"/>
</dbReference>
<dbReference type="PANTHER" id="PTHR33705:SF1">
    <property type="entry name" value="PHOSPHOCARRIER PROTEIN HPR"/>
    <property type="match status" value="1"/>
</dbReference>
<dbReference type="Pfam" id="PF00381">
    <property type="entry name" value="PTS-HPr"/>
    <property type="match status" value="1"/>
</dbReference>
<dbReference type="PRINTS" id="PR00107">
    <property type="entry name" value="PHOSPHOCPHPR"/>
</dbReference>
<dbReference type="SUPFAM" id="SSF55594">
    <property type="entry name" value="HPr-like"/>
    <property type="match status" value="1"/>
</dbReference>
<dbReference type="PROSITE" id="PS51350">
    <property type="entry name" value="PTS_HPR_DOM"/>
    <property type="match status" value="1"/>
</dbReference>
<dbReference type="PROSITE" id="PS00369">
    <property type="entry name" value="PTS_HPR_HIS"/>
    <property type="match status" value="1"/>
</dbReference>
<dbReference type="PROSITE" id="PS00589">
    <property type="entry name" value="PTS_HPR_SER"/>
    <property type="match status" value="1"/>
</dbReference>
<keyword id="KW-0963">Cytoplasm</keyword>
<keyword id="KW-0598">Phosphotransferase system</keyword>
<keyword id="KW-1185">Reference proteome</keyword>
<keyword id="KW-0762">Sugar transport</keyword>
<keyword id="KW-0813">Transport</keyword>
<reference key="1">
    <citation type="journal article" date="2003" name="Proc. Natl. Acad. Sci. U.S.A.">
        <title>Reductive genome evolution in Buchnera aphidicola.</title>
        <authorList>
            <person name="van Ham R.C.H.J."/>
            <person name="Kamerbeek J."/>
            <person name="Palacios C."/>
            <person name="Rausell C."/>
            <person name="Abascal F."/>
            <person name="Bastolla U."/>
            <person name="Fernandez J.M."/>
            <person name="Jimenez L."/>
            <person name="Postigo M."/>
            <person name="Silva F.J."/>
            <person name="Tamames J."/>
            <person name="Viguera E."/>
            <person name="Latorre A."/>
            <person name="Valencia A."/>
            <person name="Moran F."/>
            <person name="Moya A."/>
        </authorList>
    </citation>
    <scope>NUCLEOTIDE SEQUENCE [LARGE SCALE GENOMIC DNA]</scope>
    <source>
        <strain>Bp</strain>
    </source>
</reference>
<proteinExistence type="inferred from homology"/>
<protein>
    <recommendedName>
        <fullName>Phosphocarrier protein HPr</fullName>
    </recommendedName>
    <alternativeName>
        <fullName>Histidine-containing protein</fullName>
    </alternativeName>
</protein>
<evidence type="ECO:0000250" key="1"/>
<evidence type="ECO:0000255" key="2">
    <source>
        <dbReference type="PROSITE-ProRule" id="PRU00681"/>
    </source>
</evidence>
<evidence type="ECO:0000305" key="3"/>
<gene>
    <name type="primary">ptsH</name>
    <name type="ordered locus">bbp_061</name>
</gene>
<name>PTHP_BUCBP</name>